<gene>
    <name evidence="1" type="primary">plsY</name>
    <name type="ordered locus">Ava_2907</name>
</gene>
<feature type="chain" id="PRO_0000250281" description="Glycerol-3-phosphate acyltransferase">
    <location>
        <begin position="1"/>
        <end position="226"/>
    </location>
</feature>
<feature type="transmembrane region" description="Helical" evidence="1">
    <location>
        <begin position="1"/>
        <end position="21"/>
    </location>
</feature>
<feature type="transmembrane region" description="Helical" evidence="1">
    <location>
        <begin position="56"/>
        <end position="76"/>
    </location>
</feature>
<feature type="transmembrane region" description="Helical" evidence="1">
    <location>
        <begin position="102"/>
        <end position="122"/>
    </location>
</feature>
<feature type="transmembrane region" description="Helical" evidence="1">
    <location>
        <begin position="134"/>
        <end position="154"/>
    </location>
</feature>
<feature type="transmembrane region" description="Helical" evidence="1">
    <location>
        <begin position="159"/>
        <end position="178"/>
    </location>
</feature>
<feature type="transmembrane region" description="Helical" evidence="1">
    <location>
        <begin position="182"/>
        <end position="197"/>
    </location>
</feature>
<name>PLSY_TRIV2</name>
<dbReference type="EC" id="2.3.1.275" evidence="1"/>
<dbReference type="EMBL" id="CP000117">
    <property type="protein sequence ID" value="ABA22518.1"/>
    <property type="molecule type" value="Genomic_DNA"/>
</dbReference>
<dbReference type="SMR" id="Q3M918"/>
<dbReference type="STRING" id="240292.Ava_2907"/>
<dbReference type="KEGG" id="ava:Ava_2907"/>
<dbReference type="eggNOG" id="COG0344">
    <property type="taxonomic scope" value="Bacteria"/>
</dbReference>
<dbReference type="HOGENOM" id="CLU_081254_7_1_3"/>
<dbReference type="UniPathway" id="UPA00085"/>
<dbReference type="Proteomes" id="UP000002533">
    <property type="component" value="Chromosome"/>
</dbReference>
<dbReference type="GO" id="GO:0005886">
    <property type="term" value="C:plasma membrane"/>
    <property type="evidence" value="ECO:0007669"/>
    <property type="project" value="UniProtKB-SubCell"/>
</dbReference>
<dbReference type="GO" id="GO:0043772">
    <property type="term" value="F:acyl-phosphate glycerol-3-phosphate acyltransferase activity"/>
    <property type="evidence" value="ECO:0007669"/>
    <property type="project" value="UniProtKB-UniRule"/>
</dbReference>
<dbReference type="GO" id="GO:0008654">
    <property type="term" value="P:phospholipid biosynthetic process"/>
    <property type="evidence" value="ECO:0007669"/>
    <property type="project" value="UniProtKB-UniRule"/>
</dbReference>
<dbReference type="HAMAP" id="MF_01043">
    <property type="entry name" value="PlsY"/>
    <property type="match status" value="1"/>
</dbReference>
<dbReference type="InterPro" id="IPR003811">
    <property type="entry name" value="G3P_acylTferase_PlsY"/>
</dbReference>
<dbReference type="NCBIfam" id="TIGR00023">
    <property type="entry name" value="glycerol-3-phosphate 1-O-acyltransferase PlsY"/>
    <property type="match status" value="1"/>
</dbReference>
<dbReference type="PANTHER" id="PTHR30309:SF0">
    <property type="entry name" value="GLYCEROL-3-PHOSPHATE ACYLTRANSFERASE-RELATED"/>
    <property type="match status" value="1"/>
</dbReference>
<dbReference type="PANTHER" id="PTHR30309">
    <property type="entry name" value="INNER MEMBRANE PROTEIN YGIH"/>
    <property type="match status" value="1"/>
</dbReference>
<dbReference type="Pfam" id="PF02660">
    <property type="entry name" value="G3P_acyltransf"/>
    <property type="match status" value="1"/>
</dbReference>
<dbReference type="SMART" id="SM01207">
    <property type="entry name" value="G3P_acyltransf"/>
    <property type="match status" value="1"/>
</dbReference>
<comment type="function">
    <text evidence="1">Catalyzes the transfer of an acyl group from acyl-phosphate (acyl-PO(4)) to glycerol-3-phosphate (G3P) to form lysophosphatidic acid (LPA). This enzyme utilizes acyl-phosphate as fatty acyl donor, but not acyl-CoA or acyl-ACP.</text>
</comment>
<comment type="catalytic activity">
    <reaction evidence="1">
        <text>an acyl phosphate + sn-glycerol 3-phosphate = a 1-acyl-sn-glycero-3-phosphate + phosphate</text>
        <dbReference type="Rhea" id="RHEA:34075"/>
        <dbReference type="ChEBI" id="CHEBI:43474"/>
        <dbReference type="ChEBI" id="CHEBI:57597"/>
        <dbReference type="ChEBI" id="CHEBI:57970"/>
        <dbReference type="ChEBI" id="CHEBI:59918"/>
        <dbReference type="EC" id="2.3.1.275"/>
    </reaction>
</comment>
<comment type="pathway">
    <text evidence="1">Lipid metabolism; phospholipid metabolism.</text>
</comment>
<comment type="subunit">
    <text evidence="1">Probably interacts with PlsX.</text>
</comment>
<comment type="subcellular location">
    <subcellularLocation>
        <location evidence="1">Cell inner membrane</location>
        <topology evidence="1">Multi-pass membrane protein</topology>
    </subcellularLocation>
</comment>
<comment type="similarity">
    <text evidence="1">Belongs to the PlsY family.</text>
</comment>
<organism>
    <name type="scientific">Trichormus variabilis (strain ATCC 29413 / PCC 7937)</name>
    <name type="common">Anabaena variabilis</name>
    <dbReference type="NCBI Taxonomy" id="240292"/>
    <lineage>
        <taxon>Bacteria</taxon>
        <taxon>Bacillati</taxon>
        <taxon>Cyanobacteriota</taxon>
        <taxon>Cyanophyceae</taxon>
        <taxon>Nostocales</taxon>
        <taxon>Nostocaceae</taxon>
        <taxon>Trichormus</taxon>
    </lineage>
</organism>
<reference key="1">
    <citation type="journal article" date="2014" name="Stand. Genomic Sci.">
        <title>Complete genome sequence of Anabaena variabilis ATCC 29413.</title>
        <authorList>
            <person name="Thiel T."/>
            <person name="Pratte B.S."/>
            <person name="Zhong J."/>
            <person name="Goodwin L."/>
            <person name="Copeland A."/>
            <person name="Lucas S."/>
            <person name="Han C."/>
            <person name="Pitluck S."/>
            <person name="Land M.L."/>
            <person name="Kyrpides N.C."/>
            <person name="Woyke T."/>
        </authorList>
    </citation>
    <scope>NUCLEOTIDE SEQUENCE [LARGE SCALE GENOMIC DNA]</scope>
    <source>
        <strain>ATCC 29413 / PCC 7937</strain>
    </source>
</reference>
<keyword id="KW-0997">Cell inner membrane</keyword>
<keyword id="KW-1003">Cell membrane</keyword>
<keyword id="KW-0444">Lipid biosynthesis</keyword>
<keyword id="KW-0443">Lipid metabolism</keyword>
<keyword id="KW-0472">Membrane</keyword>
<keyword id="KW-0594">Phospholipid biosynthesis</keyword>
<keyword id="KW-1208">Phospholipid metabolism</keyword>
<keyword id="KW-0808">Transferase</keyword>
<keyword id="KW-0812">Transmembrane</keyword>
<keyword id="KW-1133">Transmembrane helix</keyword>
<sequence length="226" mass="23685">MGLWLSLCGAVVVVAYLLGSFPTGYIAVKQLKGIDIREVGSGSTGATNVLRTLGKGPGAFVLGLDCLKGVLAIALVDYLFNFATSQNLIPTTVNVQLWQPWLVTLAGIAAILGHSKSIFLGFTGGKSVATSLGILLAMNWQVGLATFGVFAVVVAISRIVSLSSIMGAIAVSIVMVVLQQPLPYILFGIAGGLYVILRHRSNIERLLAGTEPKIGQKLTTETEQSA</sequence>
<accession>Q3M918</accession>
<protein>
    <recommendedName>
        <fullName evidence="1">Glycerol-3-phosphate acyltransferase</fullName>
    </recommendedName>
    <alternativeName>
        <fullName evidence="1">Acyl-PO4 G3P acyltransferase</fullName>
    </alternativeName>
    <alternativeName>
        <fullName evidence="1">Acyl-phosphate--glycerol-3-phosphate acyltransferase</fullName>
    </alternativeName>
    <alternativeName>
        <fullName evidence="1">G3P acyltransferase</fullName>
        <shortName evidence="1">GPAT</shortName>
        <ecNumber evidence="1">2.3.1.275</ecNumber>
    </alternativeName>
    <alternativeName>
        <fullName evidence="1">Lysophosphatidic acid synthase</fullName>
        <shortName evidence="1">LPA synthase</shortName>
    </alternativeName>
</protein>
<proteinExistence type="inferred from homology"/>
<evidence type="ECO:0000255" key="1">
    <source>
        <dbReference type="HAMAP-Rule" id="MF_01043"/>
    </source>
</evidence>